<reference key="1">
    <citation type="journal article" date="2013" name="Am. J. Trop. Med. Hyg.">
        <title>Detection of human monkeypox in the republic of the congo following intensive community education.</title>
        <authorList>
            <person name="Reynolds M.G."/>
            <person name="Emerson G.L."/>
            <person name="Pukuta E."/>
            <person name="Karhemere S."/>
            <person name="Muyembe J.J."/>
            <person name="Bikindou A."/>
            <person name="McCollum A.M."/>
            <person name="Moses C."/>
            <person name="Wilkins K."/>
            <person name="Zhao H."/>
            <person name="Damon I.K."/>
            <person name="Karem K.L."/>
            <person name="Li Y."/>
            <person name="Carroll D.S."/>
            <person name="Mombouli J.V."/>
        </authorList>
    </citation>
    <scope>NUCLEOTIDE SEQUENCE [GENOMIC DNA]</scope>
    <source>
        <strain>ROC2010</strain>
    </source>
</reference>
<reference key="2">
    <citation type="journal article" date="2022" name="J. Infect. Dis.">
        <title>Exportation of Monkeypox virus from the African continent.</title>
        <authorList>
            <person name="Mauldin M.R."/>
            <person name="McCollum A.M."/>
            <person name="Nakazawa Y.J."/>
            <person name="Mandra A."/>
            <person name="Whitehouse E.R."/>
            <person name="Davidson W."/>
            <person name="Zhao H."/>
            <person name="Gao J."/>
            <person name="Li Y."/>
            <person name="Doty J."/>
            <person name="Yinka-Ogunleye A."/>
            <person name="Akinpelu A."/>
            <person name="Aruna O."/>
            <person name="Naidoo D."/>
            <person name="Lewandowski K."/>
            <person name="Afrough B."/>
            <person name="Graham V."/>
            <person name="Aarons E."/>
            <person name="Hewson R."/>
            <person name="Vipond R."/>
            <person name="Dunning J."/>
            <person name="Chand M."/>
            <person name="Brown C."/>
            <person name="Cohen-Gihon I."/>
            <person name="Erez N."/>
            <person name="Shifman O."/>
            <person name="Israeli O."/>
            <person name="Sharon M."/>
            <person name="Schwartz E."/>
            <person name="Beth-Din A."/>
            <person name="Zvi A."/>
            <person name="Mak T.M."/>
            <person name="Ng Y.K."/>
            <person name="Cui L."/>
            <person name="Lin R.T.P."/>
            <person name="Olson V.A."/>
            <person name="Brooks T."/>
            <person name="Paran N."/>
            <person name="Ihekweazu C."/>
            <person name="Reynolds M.G."/>
        </authorList>
    </citation>
    <scope>NUCLEOTIDE SEQUENCE [LARGE SCALE GENOMIC DNA]</scope>
    <source>
        <strain>MPXV-M5312_HM12_Rivers</strain>
    </source>
</reference>
<keyword id="KW-1015">Disulfide bond</keyword>
<keyword id="KW-0472">Membrane</keyword>
<keyword id="KW-0597">Phosphoprotein</keyword>
<keyword id="KW-1185">Reference proteome</keyword>
<keyword id="KW-0812">Transmembrane</keyword>
<keyword id="KW-1133">Transmembrane helix</keyword>
<keyword id="KW-0261">Viral envelope protein</keyword>
<keyword id="KW-0946">Virion</keyword>
<accession>A0A7H0DNB2</accession>
<proteinExistence type="inferred from homology"/>
<sequence length="90" mass="9994">MDMMLMIGNYFSGVLIAGIILLILSCIFAFIDFSKSTSPTRTWKVLSIMAFILGIIITVGMLIYSMWGKHCAPHRVSGVIHTNHSDISMN</sequence>
<dbReference type="EMBL" id="KC257461">
    <property type="protein sequence ID" value="AGF37029.1"/>
    <property type="molecule type" value="Genomic_DNA"/>
</dbReference>
<dbReference type="EMBL" id="MT903340">
    <property type="protein sequence ID" value="QNP12995.1"/>
    <property type="molecule type" value="Genomic_DNA"/>
</dbReference>
<dbReference type="RefSeq" id="NP_536552.1">
    <property type="nucleotide sequence ID" value="NC_003310.1"/>
</dbReference>
<dbReference type="RefSeq" id="YP_010377122.1">
    <property type="nucleotide sequence ID" value="NC_063383.1"/>
</dbReference>
<dbReference type="SMR" id="A0A7H0DNB2"/>
<dbReference type="GeneID" id="72551535"/>
<dbReference type="GeneID" id="929023"/>
<dbReference type="KEGG" id="vg:929023"/>
<dbReference type="Proteomes" id="UP000516359">
    <property type="component" value="Genome"/>
</dbReference>
<dbReference type="GO" id="GO:0016020">
    <property type="term" value="C:membrane"/>
    <property type="evidence" value="ECO:0007669"/>
    <property type="project" value="UniProtKB-KW"/>
</dbReference>
<dbReference type="GO" id="GO:0019031">
    <property type="term" value="C:viral envelope"/>
    <property type="evidence" value="ECO:0007669"/>
    <property type="project" value="UniProtKB-KW"/>
</dbReference>
<dbReference type="GO" id="GO:0055036">
    <property type="term" value="C:virion membrane"/>
    <property type="evidence" value="ECO:0007669"/>
    <property type="project" value="UniProtKB-SubCell"/>
</dbReference>
<dbReference type="InterPro" id="IPR008785">
    <property type="entry name" value="Poxvirus_A14"/>
</dbReference>
<dbReference type="Pfam" id="PF05767">
    <property type="entry name" value="Pox_A14"/>
    <property type="match status" value="1"/>
</dbReference>
<evidence type="ECO:0000250" key="1">
    <source>
        <dbReference type="UniProtKB" id="Q76ZQ3"/>
    </source>
</evidence>
<evidence type="ECO:0000255" key="2"/>
<evidence type="ECO:0000305" key="3"/>
<protein>
    <recommendedName>
        <fullName>Virion membrane protein OPG140</fullName>
    </recommendedName>
</protein>
<organismHost>
    <name type="scientific">Cynomys gunnisoni</name>
    <name type="common">Gunnison's prairie dog</name>
    <name type="synonym">Spermophilus gunnisoni</name>
    <dbReference type="NCBI Taxonomy" id="45479"/>
</organismHost>
<organismHost>
    <name type="scientific">Cynomys leucurus</name>
    <name type="common">White-tailed prairie dog</name>
    <dbReference type="NCBI Taxonomy" id="99825"/>
</organismHost>
<organismHost>
    <name type="scientific">Cynomys ludovicianus</name>
    <name type="common">Black-tailed prairie dog</name>
    <dbReference type="NCBI Taxonomy" id="45480"/>
</organismHost>
<organismHost>
    <name type="scientific">Cynomys mexicanus</name>
    <name type="common">Mexican prairie dog</name>
    <dbReference type="NCBI Taxonomy" id="99826"/>
</organismHost>
<organismHost>
    <name type="scientific">Cynomys parvidens</name>
    <name type="common">Utah prairie dog</name>
    <dbReference type="NCBI Taxonomy" id="99827"/>
</organismHost>
<organismHost>
    <name type="scientific">Gliridae</name>
    <name type="common">dormice</name>
    <dbReference type="NCBI Taxonomy" id="30650"/>
</organismHost>
<organismHost>
    <name type="scientific">Heliosciurus ruwenzorii</name>
    <name type="common">Ruwenzori sun squirrel</name>
    <dbReference type="NCBI Taxonomy" id="226685"/>
</organismHost>
<organismHost>
    <name type="scientific">Homo sapiens</name>
    <name type="common">Human</name>
    <dbReference type="NCBI Taxonomy" id="9606"/>
</organismHost>
<organismHost>
    <name type="scientific">Mus musculus</name>
    <name type="common">Mouse</name>
    <dbReference type="NCBI Taxonomy" id="10090"/>
</organismHost>
<name>PG140_MONPV</name>
<feature type="chain" id="PRO_0000457511" description="Virion membrane protein OPG140">
    <location>
        <begin position="1"/>
        <end position="90"/>
    </location>
</feature>
<feature type="topological domain" description="Intravirion" evidence="2">
    <location>
        <begin position="1"/>
        <end position="10"/>
    </location>
</feature>
<feature type="transmembrane region" description="Helical" evidence="2">
    <location>
        <begin position="11"/>
        <end position="31"/>
    </location>
</feature>
<feature type="topological domain" description="Virion surface" evidence="2">
    <location>
        <begin position="32"/>
        <end position="44"/>
    </location>
</feature>
<feature type="transmembrane region" description="Helical" evidence="2">
    <location>
        <begin position="45"/>
        <end position="65"/>
    </location>
</feature>
<feature type="topological domain" description="Intravirion" evidence="2">
    <location>
        <begin position="66"/>
        <end position="90"/>
    </location>
</feature>
<feature type="modified residue" description="Phosphoserine" evidence="1">
    <location>
        <position position="85"/>
    </location>
</feature>
<feature type="disulfide bond" description="Interchain" evidence="1">
    <location>
        <position position="71"/>
    </location>
</feature>
<organism>
    <name type="scientific">Monkeypox virus</name>
    <dbReference type="NCBI Taxonomy" id="10244"/>
    <lineage>
        <taxon>Viruses</taxon>
        <taxon>Varidnaviria</taxon>
        <taxon>Bamfordvirae</taxon>
        <taxon>Nucleocytoviricota</taxon>
        <taxon>Pokkesviricetes</taxon>
        <taxon>Chitovirales</taxon>
        <taxon>Poxviridae</taxon>
        <taxon>Chordopoxvirinae</taxon>
        <taxon>Orthopoxvirus</taxon>
    </lineage>
</organism>
<gene>
    <name type="primary">OPG140</name>
    <name type="ORF">MPXVgp125</name>
</gene>
<comment type="function">
    <text evidence="1">Envelope protein which is a major component of the mature virion (MV) membrane. Essential for membrane biogenesis. Is required, together with OPG144, to form bona fide crescents, which can progress to form the immature virion (IV) membrane. OPG140 and OPG144 form a lattice that is stabilized by disulfide bonds and serves as an anchor within the viral membrane to which several other proteins important in virion structure and morphogenesis attach.</text>
</comment>
<comment type="subunit">
    <text evidence="1">Homodimer; disulfide-linked. Interacts with OPG144.</text>
</comment>
<comment type="subcellular location">
    <subcellularLocation>
        <location evidence="1">Virion membrane</location>
        <topology evidence="1">Multi-pass membrane protein</topology>
    </subcellularLocation>
    <text evidence="1">Component of the mature virion (MV) membrane.</text>
</comment>
<comment type="PTM">
    <text evidence="1">Phosphorylated by viral OPG054 kinase, phosphorylation state is regulated by OPG106 phosphatase.</text>
</comment>
<comment type="similarity">
    <text evidence="3">Belongs to the orthopoxvirus OPG140 family.</text>
</comment>